<keyword id="KW-0963">Cytoplasm</keyword>
<keyword id="KW-0378">Hydrolase</keyword>
<keyword id="KW-0479">Metal-binding</keyword>
<keyword id="KW-0533">Nickel</keyword>
<keyword id="KW-1185">Reference proteome</keyword>
<evidence type="ECO:0000255" key="1">
    <source>
        <dbReference type="HAMAP-Rule" id="MF_01953"/>
    </source>
</evidence>
<feature type="chain" id="PRO_0000234187" description="Urease subunit alpha 1">
    <location>
        <begin position="1"/>
        <end position="573"/>
    </location>
</feature>
<feature type="domain" description="Urease" evidence="1">
    <location>
        <begin position="136"/>
        <end position="573"/>
    </location>
</feature>
<feature type="active site" description="Proton donor" evidence="1">
    <location>
        <position position="327"/>
    </location>
</feature>
<feature type="binding site" evidence="1">
    <location>
        <position position="141"/>
    </location>
    <ligand>
        <name>Ni(2+)</name>
        <dbReference type="ChEBI" id="CHEBI:49786"/>
        <label>1</label>
    </ligand>
</feature>
<feature type="binding site" evidence="1">
    <location>
        <position position="143"/>
    </location>
    <ligand>
        <name>Ni(2+)</name>
        <dbReference type="ChEBI" id="CHEBI:49786"/>
        <label>1</label>
    </ligand>
</feature>
<feature type="binding site" description="via carbamate group" evidence="1">
    <location>
        <position position="224"/>
    </location>
    <ligand>
        <name>Ni(2+)</name>
        <dbReference type="ChEBI" id="CHEBI:49786"/>
        <label>1</label>
    </ligand>
</feature>
<feature type="binding site" description="via carbamate group" evidence="1">
    <location>
        <position position="224"/>
    </location>
    <ligand>
        <name>Ni(2+)</name>
        <dbReference type="ChEBI" id="CHEBI:49786"/>
        <label>2</label>
    </ligand>
</feature>
<feature type="binding site" evidence="1">
    <location>
        <position position="226"/>
    </location>
    <ligand>
        <name>substrate</name>
    </ligand>
</feature>
<feature type="binding site" evidence="1">
    <location>
        <position position="253"/>
    </location>
    <ligand>
        <name>Ni(2+)</name>
        <dbReference type="ChEBI" id="CHEBI:49786"/>
        <label>2</label>
    </ligand>
</feature>
<feature type="binding site" evidence="1">
    <location>
        <position position="279"/>
    </location>
    <ligand>
        <name>Ni(2+)</name>
        <dbReference type="ChEBI" id="CHEBI:49786"/>
        <label>2</label>
    </ligand>
</feature>
<feature type="binding site" evidence="1">
    <location>
        <position position="367"/>
    </location>
    <ligand>
        <name>Ni(2+)</name>
        <dbReference type="ChEBI" id="CHEBI:49786"/>
        <label>1</label>
    </ligand>
</feature>
<feature type="modified residue" description="N6-carboxylysine" evidence="1">
    <location>
        <position position="224"/>
    </location>
</feature>
<reference key="1">
    <citation type="journal article" date="2002" name="Nature">
        <title>Complete genome sequence of the model actinomycete Streptomyces coelicolor A3(2).</title>
        <authorList>
            <person name="Bentley S.D."/>
            <person name="Chater K.F."/>
            <person name="Cerdeno-Tarraga A.-M."/>
            <person name="Challis G.L."/>
            <person name="Thomson N.R."/>
            <person name="James K.D."/>
            <person name="Harris D.E."/>
            <person name="Quail M.A."/>
            <person name="Kieser H."/>
            <person name="Harper D."/>
            <person name="Bateman A."/>
            <person name="Brown S."/>
            <person name="Chandra G."/>
            <person name="Chen C.W."/>
            <person name="Collins M."/>
            <person name="Cronin A."/>
            <person name="Fraser A."/>
            <person name="Goble A."/>
            <person name="Hidalgo J."/>
            <person name="Hornsby T."/>
            <person name="Howarth S."/>
            <person name="Huang C.-H."/>
            <person name="Kieser T."/>
            <person name="Larke L."/>
            <person name="Murphy L.D."/>
            <person name="Oliver K."/>
            <person name="O'Neil S."/>
            <person name="Rabbinowitsch E."/>
            <person name="Rajandream M.A."/>
            <person name="Rutherford K.M."/>
            <person name="Rutter S."/>
            <person name="Seeger K."/>
            <person name="Saunders D."/>
            <person name="Sharp S."/>
            <person name="Squares R."/>
            <person name="Squares S."/>
            <person name="Taylor K."/>
            <person name="Warren T."/>
            <person name="Wietzorrek A."/>
            <person name="Woodward J.R."/>
            <person name="Barrell B.G."/>
            <person name="Parkhill J."/>
            <person name="Hopwood D.A."/>
        </authorList>
    </citation>
    <scope>NUCLEOTIDE SEQUENCE [LARGE SCALE GENOMIC DNA]</scope>
    <source>
        <strain>ATCC BAA-471 / A3(2) / M145</strain>
    </source>
</reference>
<gene>
    <name evidence="1" type="primary">ureC1</name>
    <name type="ordered locus">SCO1234</name>
    <name type="ORF">2SCG1.09c</name>
</gene>
<proteinExistence type="inferred from homology"/>
<name>URE11_STRCO</name>
<dbReference type="EC" id="3.5.1.5" evidence="1"/>
<dbReference type="EMBL" id="AL939108">
    <property type="protein sequence ID" value="CAC01458.1"/>
    <property type="molecule type" value="Genomic_DNA"/>
</dbReference>
<dbReference type="RefSeq" id="NP_625522.1">
    <property type="nucleotide sequence ID" value="NC_003888.3"/>
</dbReference>
<dbReference type="RefSeq" id="WP_003977597.1">
    <property type="nucleotide sequence ID" value="NZ_VNID01000006.1"/>
</dbReference>
<dbReference type="SMR" id="Q9FCD3"/>
<dbReference type="FunCoup" id="Q9FCD3">
    <property type="interactions" value="71"/>
</dbReference>
<dbReference type="STRING" id="100226.gene:17758817"/>
<dbReference type="PaxDb" id="100226-SCO1234"/>
<dbReference type="KEGG" id="sco:SCO1234"/>
<dbReference type="PATRIC" id="fig|100226.15.peg.1233"/>
<dbReference type="eggNOG" id="COG0804">
    <property type="taxonomic scope" value="Bacteria"/>
</dbReference>
<dbReference type="HOGENOM" id="CLU_000980_0_0_11"/>
<dbReference type="InParanoid" id="Q9FCD3"/>
<dbReference type="OrthoDB" id="9802793at2"/>
<dbReference type="PhylomeDB" id="Q9FCD3"/>
<dbReference type="UniPathway" id="UPA00258">
    <property type="reaction ID" value="UER00370"/>
</dbReference>
<dbReference type="Proteomes" id="UP000001973">
    <property type="component" value="Chromosome"/>
</dbReference>
<dbReference type="GO" id="GO:0005737">
    <property type="term" value="C:cytoplasm"/>
    <property type="evidence" value="ECO:0007669"/>
    <property type="project" value="UniProtKB-SubCell"/>
</dbReference>
<dbReference type="GO" id="GO:0016151">
    <property type="term" value="F:nickel cation binding"/>
    <property type="evidence" value="ECO:0007669"/>
    <property type="project" value="UniProtKB-UniRule"/>
</dbReference>
<dbReference type="GO" id="GO:0009039">
    <property type="term" value="F:urease activity"/>
    <property type="evidence" value="ECO:0007669"/>
    <property type="project" value="UniProtKB-UniRule"/>
</dbReference>
<dbReference type="GO" id="GO:0043419">
    <property type="term" value="P:urea catabolic process"/>
    <property type="evidence" value="ECO:0007669"/>
    <property type="project" value="UniProtKB-UniRule"/>
</dbReference>
<dbReference type="CDD" id="cd00375">
    <property type="entry name" value="Urease_alpha"/>
    <property type="match status" value="1"/>
</dbReference>
<dbReference type="Gene3D" id="3.20.20.140">
    <property type="entry name" value="Metal-dependent hydrolases"/>
    <property type="match status" value="1"/>
</dbReference>
<dbReference type="Gene3D" id="2.30.40.10">
    <property type="entry name" value="Urease, subunit C, domain 1"/>
    <property type="match status" value="1"/>
</dbReference>
<dbReference type="HAMAP" id="MF_01953">
    <property type="entry name" value="Urease_alpha"/>
    <property type="match status" value="1"/>
</dbReference>
<dbReference type="InterPro" id="IPR006680">
    <property type="entry name" value="Amidohydro-rel"/>
</dbReference>
<dbReference type="InterPro" id="IPR011059">
    <property type="entry name" value="Metal-dep_hydrolase_composite"/>
</dbReference>
<dbReference type="InterPro" id="IPR032466">
    <property type="entry name" value="Metal_Hydrolase"/>
</dbReference>
<dbReference type="InterPro" id="IPR011612">
    <property type="entry name" value="Urease_alpha_N_dom"/>
</dbReference>
<dbReference type="InterPro" id="IPR050112">
    <property type="entry name" value="Urease_alpha_subunit"/>
</dbReference>
<dbReference type="InterPro" id="IPR017950">
    <property type="entry name" value="Urease_AS"/>
</dbReference>
<dbReference type="InterPro" id="IPR005848">
    <property type="entry name" value="Urease_asu"/>
</dbReference>
<dbReference type="InterPro" id="IPR017951">
    <property type="entry name" value="Urease_asu_c"/>
</dbReference>
<dbReference type="InterPro" id="IPR029754">
    <property type="entry name" value="Urease_Ni-bd"/>
</dbReference>
<dbReference type="NCBIfam" id="NF009685">
    <property type="entry name" value="PRK13206.1"/>
    <property type="match status" value="1"/>
</dbReference>
<dbReference type="NCBIfam" id="NF009686">
    <property type="entry name" value="PRK13207.1"/>
    <property type="match status" value="1"/>
</dbReference>
<dbReference type="NCBIfam" id="TIGR01792">
    <property type="entry name" value="urease_alph"/>
    <property type="match status" value="1"/>
</dbReference>
<dbReference type="PANTHER" id="PTHR43440">
    <property type="entry name" value="UREASE"/>
    <property type="match status" value="1"/>
</dbReference>
<dbReference type="PANTHER" id="PTHR43440:SF1">
    <property type="entry name" value="UREASE"/>
    <property type="match status" value="1"/>
</dbReference>
<dbReference type="Pfam" id="PF01979">
    <property type="entry name" value="Amidohydro_1"/>
    <property type="match status" value="1"/>
</dbReference>
<dbReference type="Pfam" id="PF00449">
    <property type="entry name" value="Urease_alpha"/>
    <property type="match status" value="1"/>
</dbReference>
<dbReference type="PRINTS" id="PR01752">
    <property type="entry name" value="UREASE"/>
</dbReference>
<dbReference type="SUPFAM" id="SSF51338">
    <property type="entry name" value="Composite domain of metallo-dependent hydrolases"/>
    <property type="match status" value="2"/>
</dbReference>
<dbReference type="SUPFAM" id="SSF51556">
    <property type="entry name" value="Metallo-dependent hydrolases"/>
    <property type="match status" value="1"/>
</dbReference>
<dbReference type="PROSITE" id="PS01120">
    <property type="entry name" value="UREASE_1"/>
    <property type="match status" value="1"/>
</dbReference>
<dbReference type="PROSITE" id="PS00145">
    <property type="entry name" value="UREASE_2"/>
    <property type="match status" value="1"/>
</dbReference>
<dbReference type="PROSITE" id="PS51368">
    <property type="entry name" value="UREASE_3"/>
    <property type="match status" value="1"/>
</dbReference>
<protein>
    <recommendedName>
        <fullName evidence="1">Urease subunit alpha 1</fullName>
        <ecNumber evidence="1">3.5.1.5</ecNumber>
    </recommendedName>
    <alternativeName>
        <fullName evidence="1">Urea amidohydrolase subunit alpha 1</fullName>
    </alternativeName>
</protein>
<sequence>MPELSRTAYADLFGPTTGDRVRLADTDLFVEIEEDRSGGPGRSGDEAVFGGGKVLRESMGQGRTTRAQGAPDTVITGALIIDHWGIVKADIGIRDGRITGIGKAGNPDTMDGVHPDLVIGPETEIVAGNGKIVTAGGIDTHVHFIAPGAVDEALASGVTTLIGGGTGPAEGSKATTVTPGAWHLAWMFAALESSPVNIGFLGKGSTMSKESMRDQLRAGVLGFKIHEDWGATPAVISACLDVCEESGVQLAVHSDTLNEAGFVGDTFDAVAGRTLHAFHVEGAGGGHAPDMITAVSLPNMLPASTNPTRPHTVNTVEEHLDMLMVCHHLNPAVPEDLAFAESRIRPSTIAAEDILHDMGAISIMSSDAQAMGRIGEVILRTWQTAHVMKRRRGFLPGDTRADNLRARRYVAKYTINPAVAQGIEHEVGSVETGKLADLVLWDPRFFGAKPQLVIKGGQIAYAQMGDANASIPTPQPVLPRPMYGALGTAPATNSVNFVSEQAVEDGLPERLGLGRAFVPIRSTRGRTKADMRQNDALPRVEVAADSFAVTIDGELVEPAPVTELPLAQRYFLF</sequence>
<organism>
    <name type="scientific">Streptomyces coelicolor (strain ATCC BAA-471 / A3(2) / M145)</name>
    <dbReference type="NCBI Taxonomy" id="100226"/>
    <lineage>
        <taxon>Bacteria</taxon>
        <taxon>Bacillati</taxon>
        <taxon>Actinomycetota</taxon>
        <taxon>Actinomycetes</taxon>
        <taxon>Kitasatosporales</taxon>
        <taxon>Streptomycetaceae</taxon>
        <taxon>Streptomyces</taxon>
        <taxon>Streptomyces albidoflavus group</taxon>
    </lineage>
</organism>
<accession>Q9FCD3</accession>
<comment type="catalytic activity">
    <reaction evidence="1">
        <text>urea + 2 H2O + H(+) = hydrogencarbonate + 2 NH4(+)</text>
        <dbReference type="Rhea" id="RHEA:20557"/>
        <dbReference type="ChEBI" id="CHEBI:15377"/>
        <dbReference type="ChEBI" id="CHEBI:15378"/>
        <dbReference type="ChEBI" id="CHEBI:16199"/>
        <dbReference type="ChEBI" id="CHEBI:17544"/>
        <dbReference type="ChEBI" id="CHEBI:28938"/>
        <dbReference type="EC" id="3.5.1.5"/>
    </reaction>
</comment>
<comment type="cofactor">
    <cofactor evidence="1">
        <name>Ni cation</name>
        <dbReference type="ChEBI" id="CHEBI:25516"/>
    </cofactor>
    <text evidence="1">Binds 2 nickel ions per subunit.</text>
</comment>
<comment type="pathway">
    <text evidence="1">Nitrogen metabolism; urea degradation; CO(2) and NH(3) from urea (urease route): step 1/1.</text>
</comment>
<comment type="subunit">
    <text evidence="1">May form a heterohexamer of 3 UreC (alpha) and 3 UreAB (gamma/beta) subunits. May also form a heterotrimer of UreA (gamma), UreB (beta) and UreC (alpha) subunits. Three heterotrimers associate to form the active enzyme.</text>
</comment>
<comment type="subcellular location">
    <subcellularLocation>
        <location evidence="1">Cytoplasm</location>
    </subcellularLocation>
</comment>
<comment type="PTM">
    <text evidence="1">Carboxylation allows a single lysine to coordinate two nickel ions.</text>
</comment>
<comment type="similarity">
    <text evidence="1">Belongs to the metallo-dependent hydrolases superfamily. Urease alpha subunit family.</text>
</comment>